<reference key="1">
    <citation type="submission" date="2008-10" db="EMBL/GenBank/DDBJ databases">
        <title>Genome sequence of Bacillus cereus AH820.</title>
        <authorList>
            <person name="Dodson R.J."/>
            <person name="Durkin A.S."/>
            <person name="Rosovitz M.J."/>
            <person name="Rasko D.A."/>
            <person name="Hoffmaster A."/>
            <person name="Ravel J."/>
            <person name="Sutton G."/>
        </authorList>
    </citation>
    <scope>NUCLEOTIDE SEQUENCE [LARGE SCALE GENOMIC DNA]</scope>
    <source>
        <strain>AH820</strain>
    </source>
</reference>
<feature type="chain" id="PRO_1000119007" description="Cytidylate kinase">
    <location>
        <begin position="1"/>
        <end position="225"/>
    </location>
</feature>
<feature type="binding site" evidence="1">
    <location>
        <begin position="11"/>
        <end position="19"/>
    </location>
    <ligand>
        <name>ATP</name>
        <dbReference type="ChEBI" id="CHEBI:30616"/>
    </ligand>
</feature>
<proteinExistence type="inferred from homology"/>
<evidence type="ECO:0000255" key="1">
    <source>
        <dbReference type="HAMAP-Rule" id="MF_00238"/>
    </source>
</evidence>
<accession>B7JGY2</accession>
<dbReference type="EC" id="2.7.4.25" evidence="1"/>
<dbReference type="EMBL" id="CP001283">
    <property type="protein sequence ID" value="ACK88465.1"/>
    <property type="molecule type" value="Genomic_DNA"/>
</dbReference>
<dbReference type="RefSeq" id="WP_000361264.1">
    <property type="nucleotide sequence ID" value="NC_011773.1"/>
</dbReference>
<dbReference type="SMR" id="B7JGY2"/>
<dbReference type="GeneID" id="93009543"/>
<dbReference type="KEGG" id="bcu:BCAH820_1591"/>
<dbReference type="HOGENOM" id="CLU_079959_0_2_9"/>
<dbReference type="Proteomes" id="UP000001363">
    <property type="component" value="Chromosome"/>
</dbReference>
<dbReference type="GO" id="GO:0005829">
    <property type="term" value="C:cytosol"/>
    <property type="evidence" value="ECO:0007669"/>
    <property type="project" value="TreeGrafter"/>
</dbReference>
<dbReference type="GO" id="GO:0005524">
    <property type="term" value="F:ATP binding"/>
    <property type="evidence" value="ECO:0007669"/>
    <property type="project" value="UniProtKB-UniRule"/>
</dbReference>
<dbReference type="GO" id="GO:0036430">
    <property type="term" value="F:CMP kinase activity"/>
    <property type="evidence" value="ECO:0007669"/>
    <property type="project" value="RHEA"/>
</dbReference>
<dbReference type="GO" id="GO:0036431">
    <property type="term" value="F:dCMP kinase activity"/>
    <property type="evidence" value="ECO:0007669"/>
    <property type="project" value="RHEA"/>
</dbReference>
<dbReference type="GO" id="GO:0015949">
    <property type="term" value="P:nucleobase-containing small molecule interconversion"/>
    <property type="evidence" value="ECO:0007669"/>
    <property type="project" value="TreeGrafter"/>
</dbReference>
<dbReference type="GO" id="GO:0006220">
    <property type="term" value="P:pyrimidine nucleotide metabolic process"/>
    <property type="evidence" value="ECO:0007669"/>
    <property type="project" value="UniProtKB-UniRule"/>
</dbReference>
<dbReference type="CDD" id="cd02020">
    <property type="entry name" value="CMPK"/>
    <property type="match status" value="1"/>
</dbReference>
<dbReference type="FunFam" id="3.40.50.300:FF:000484">
    <property type="entry name" value="Cytidylate kinase"/>
    <property type="match status" value="1"/>
</dbReference>
<dbReference type="Gene3D" id="3.40.50.300">
    <property type="entry name" value="P-loop containing nucleotide triphosphate hydrolases"/>
    <property type="match status" value="1"/>
</dbReference>
<dbReference type="HAMAP" id="MF_00238">
    <property type="entry name" value="Cytidyl_kinase_type1"/>
    <property type="match status" value="1"/>
</dbReference>
<dbReference type="InterPro" id="IPR003136">
    <property type="entry name" value="Cytidylate_kin"/>
</dbReference>
<dbReference type="InterPro" id="IPR011994">
    <property type="entry name" value="Cytidylate_kinase_dom"/>
</dbReference>
<dbReference type="InterPro" id="IPR027417">
    <property type="entry name" value="P-loop_NTPase"/>
</dbReference>
<dbReference type="NCBIfam" id="TIGR00017">
    <property type="entry name" value="cmk"/>
    <property type="match status" value="1"/>
</dbReference>
<dbReference type="PANTHER" id="PTHR21299:SF2">
    <property type="entry name" value="CYTIDYLATE KINASE"/>
    <property type="match status" value="1"/>
</dbReference>
<dbReference type="PANTHER" id="PTHR21299">
    <property type="entry name" value="CYTIDYLATE KINASE/PANTOATE-BETA-ALANINE LIGASE"/>
    <property type="match status" value="1"/>
</dbReference>
<dbReference type="Pfam" id="PF02224">
    <property type="entry name" value="Cytidylate_kin"/>
    <property type="match status" value="1"/>
</dbReference>
<dbReference type="SUPFAM" id="SSF52540">
    <property type="entry name" value="P-loop containing nucleoside triphosphate hydrolases"/>
    <property type="match status" value="1"/>
</dbReference>
<keyword id="KW-0067">ATP-binding</keyword>
<keyword id="KW-0963">Cytoplasm</keyword>
<keyword id="KW-0418">Kinase</keyword>
<keyword id="KW-0547">Nucleotide-binding</keyword>
<keyword id="KW-0808">Transferase</keyword>
<name>KCY_BACC0</name>
<gene>
    <name evidence="1" type="primary">cmk</name>
    <name type="ordered locus">BCAH820_1591</name>
</gene>
<comment type="catalytic activity">
    <reaction evidence="1">
        <text>CMP + ATP = CDP + ADP</text>
        <dbReference type="Rhea" id="RHEA:11600"/>
        <dbReference type="ChEBI" id="CHEBI:30616"/>
        <dbReference type="ChEBI" id="CHEBI:58069"/>
        <dbReference type="ChEBI" id="CHEBI:60377"/>
        <dbReference type="ChEBI" id="CHEBI:456216"/>
        <dbReference type="EC" id="2.7.4.25"/>
    </reaction>
</comment>
<comment type="catalytic activity">
    <reaction evidence="1">
        <text>dCMP + ATP = dCDP + ADP</text>
        <dbReference type="Rhea" id="RHEA:25094"/>
        <dbReference type="ChEBI" id="CHEBI:30616"/>
        <dbReference type="ChEBI" id="CHEBI:57566"/>
        <dbReference type="ChEBI" id="CHEBI:58593"/>
        <dbReference type="ChEBI" id="CHEBI:456216"/>
        <dbReference type="EC" id="2.7.4.25"/>
    </reaction>
</comment>
<comment type="subcellular location">
    <subcellularLocation>
        <location evidence="1">Cytoplasm</location>
    </subcellularLocation>
</comment>
<comment type="similarity">
    <text evidence="1">Belongs to the cytidylate kinase family. Type 1 subfamily.</text>
</comment>
<protein>
    <recommendedName>
        <fullName evidence="1">Cytidylate kinase</fullName>
        <shortName evidence="1">CK</shortName>
        <ecNumber evidence="1">2.7.4.25</ecNumber>
    </recommendedName>
    <alternativeName>
        <fullName evidence="1">Cytidine monophosphate kinase</fullName>
        <shortName evidence="1">CMP kinase</shortName>
    </alternativeName>
</protein>
<organism>
    <name type="scientific">Bacillus cereus (strain AH820)</name>
    <dbReference type="NCBI Taxonomy" id="405535"/>
    <lineage>
        <taxon>Bacteria</taxon>
        <taxon>Bacillati</taxon>
        <taxon>Bacillota</taxon>
        <taxon>Bacilli</taxon>
        <taxon>Bacillales</taxon>
        <taxon>Bacillaceae</taxon>
        <taxon>Bacillus</taxon>
        <taxon>Bacillus cereus group</taxon>
    </lineage>
</organism>
<sequence length="225" mass="25259">MDKRISIAIDGPAAAGKSTVAKVVAKKLSYVYIDTGAMYRTITYAALEQKVDIENEEQLMEVVKNVKIEFQQGENTQLVFLNGQDVSEVIRTPEVTNRVSIVAKHRLVREEMVRRQQELAEKGGVVMDGRDIGTHVLPDAEVKIFMLASVEERAERRHLENMNKGFDSNLEQLKEEIAQRDKLDSEREVSPLKKADDALELDTTSLSIEEVVQKIMGIVSGVFAK</sequence>